<dbReference type="EMBL" id="AE000516">
    <property type="protein sequence ID" value="AAK48351.1"/>
    <property type="molecule type" value="Genomic_DNA"/>
</dbReference>
<dbReference type="PIR" id="D70802">
    <property type="entry name" value="D70802"/>
</dbReference>
<dbReference type="RefSeq" id="WP_003899738.1">
    <property type="nucleotide sequence ID" value="NZ_KK341227.1"/>
</dbReference>
<dbReference type="SMR" id="P9WNB2"/>
<dbReference type="GeneID" id="45427874"/>
<dbReference type="KEGG" id="mtc:MT3983"/>
<dbReference type="PATRIC" id="fig|83331.31.peg.4285"/>
<dbReference type="HOGENOM" id="CLU_003134_1_1_11"/>
<dbReference type="Proteomes" id="UP000001020">
    <property type="component" value="Chromosome"/>
</dbReference>
<dbReference type="GO" id="GO:0005886">
    <property type="term" value="C:plasma membrane"/>
    <property type="evidence" value="ECO:0007669"/>
    <property type="project" value="UniProtKB-SubCell"/>
</dbReference>
<dbReference type="GO" id="GO:0005524">
    <property type="term" value="F:ATP binding"/>
    <property type="evidence" value="ECO:0007669"/>
    <property type="project" value="UniProtKB-KW"/>
</dbReference>
<dbReference type="GO" id="GO:0003677">
    <property type="term" value="F:DNA binding"/>
    <property type="evidence" value="ECO:0007669"/>
    <property type="project" value="InterPro"/>
</dbReference>
<dbReference type="CDD" id="cd01127">
    <property type="entry name" value="TrwB_TraG_TraD_VirD4"/>
    <property type="match status" value="1"/>
</dbReference>
<dbReference type="FunFam" id="3.40.50.300:FF:001572">
    <property type="entry name" value="ESX-1 secretion system protein eccCa1"/>
    <property type="match status" value="1"/>
</dbReference>
<dbReference type="Gene3D" id="3.40.50.300">
    <property type="entry name" value="P-loop containing nucleotide triphosphate hydrolases"/>
    <property type="match status" value="1"/>
</dbReference>
<dbReference type="InterPro" id="IPR023836">
    <property type="entry name" value="EccCa-like_Actinobacteria"/>
</dbReference>
<dbReference type="InterPro" id="IPR050206">
    <property type="entry name" value="FtsK/SpoIIIE/SftA"/>
</dbReference>
<dbReference type="InterPro" id="IPR002543">
    <property type="entry name" value="FtsK_dom"/>
</dbReference>
<dbReference type="InterPro" id="IPR027417">
    <property type="entry name" value="P-loop_NTPase"/>
</dbReference>
<dbReference type="NCBIfam" id="TIGR03924">
    <property type="entry name" value="T7SS_EccC_a"/>
    <property type="match status" value="1"/>
</dbReference>
<dbReference type="PANTHER" id="PTHR22683">
    <property type="entry name" value="SPORULATION PROTEIN RELATED"/>
    <property type="match status" value="1"/>
</dbReference>
<dbReference type="PANTHER" id="PTHR22683:SF1">
    <property type="entry name" value="TYPE VII SECRETION SYSTEM PROTEIN ESSC"/>
    <property type="match status" value="1"/>
</dbReference>
<dbReference type="Pfam" id="PF01580">
    <property type="entry name" value="FtsK_SpoIIIE"/>
    <property type="match status" value="1"/>
</dbReference>
<dbReference type="SUPFAM" id="SSF52540">
    <property type="entry name" value="P-loop containing nucleoside triphosphate hydrolases"/>
    <property type="match status" value="1"/>
</dbReference>
<dbReference type="PROSITE" id="PS50901">
    <property type="entry name" value="FTSK"/>
    <property type="match status" value="1"/>
</dbReference>
<comment type="function">
    <text evidence="1">Part of the ESX-1 specialized secretion system, which delivers several virulence factors to host cells during infection, including the key virulence factors EsxA (ESAT-6) and EsxB (CFP-10).</text>
</comment>
<comment type="subunit">
    <text evidence="1">Part of the ESX-1 / type VII secretion system (T7SS), which is composed of cytosolic and membrane components. The ESX-1 membrane complex is composed of EccB1, EccCa1, EccCb1, EccD1 and EccE1.</text>
</comment>
<comment type="subcellular location">
    <subcellularLocation>
        <location evidence="1">Cell inner membrane</location>
        <topology evidence="2">Multi-pass membrane protein</topology>
    </subcellularLocation>
</comment>
<comment type="miscellaneous">
    <text evidence="4">In ESX-1 cluster, the FtsK/SpoIIIE-like protein is split in two genes.</text>
</comment>
<reference key="1">
    <citation type="journal article" date="2002" name="J. Bacteriol.">
        <title>Whole-genome comparison of Mycobacterium tuberculosis clinical and laboratory strains.</title>
        <authorList>
            <person name="Fleischmann R.D."/>
            <person name="Alland D."/>
            <person name="Eisen J.A."/>
            <person name="Carpenter L."/>
            <person name="White O."/>
            <person name="Peterson J.D."/>
            <person name="DeBoy R.T."/>
            <person name="Dodson R.J."/>
            <person name="Gwinn M.L."/>
            <person name="Haft D.H."/>
            <person name="Hickey E.K."/>
            <person name="Kolonay J.F."/>
            <person name="Nelson W.C."/>
            <person name="Umayam L.A."/>
            <person name="Ermolaeva M.D."/>
            <person name="Salzberg S.L."/>
            <person name="Delcher A."/>
            <person name="Utterback T.R."/>
            <person name="Weidman J.F."/>
            <person name="Khouri H.M."/>
            <person name="Gill J."/>
            <person name="Mikula A."/>
            <person name="Bishai W."/>
            <person name="Jacobs W.R. Jr."/>
            <person name="Venter J.C."/>
            <person name="Fraser C.M."/>
        </authorList>
    </citation>
    <scope>NUCLEOTIDE SEQUENCE [LARGE SCALE GENOMIC DNA]</scope>
    <source>
        <strain>CDC 1551 / Oshkosh</strain>
    </source>
</reference>
<organism>
    <name type="scientific">Mycobacterium tuberculosis (strain CDC 1551 / Oshkosh)</name>
    <dbReference type="NCBI Taxonomy" id="83331"/>
    <lineage>
        <taxon>Bacteria</taxon>
        <taxon>Bacillati</taxon>
        <taxon>Actinomycetota</taxon>
        <taxon>Actinomycetes</taxon>
        <taxon>Mycobacteriales</taxon>
        <taxon>Mycobacteriaceae</taxon>
        <taxon>Mycobacterium</taxon>
        <taxon>Mycobacterium tuberculosis complex</taxon>
    </lineage>
</organism>
<feature type="chain" id="PRO_0000427157" description="ESX-1 secretion system protein EccCa1">
    <location>
        <begin position="1"/>
        <end position="747"/>
    </location>
</feature>
<feature type="transmembrane region" description="Helical" evidence="2">
    <location>
        <begin position="41"/>
        <end position="61"/>
    </location>
</feature>
<feature type="transmembrane region" description="Helical" evidence="2">
    <location>
        <begin position="65"/>
        <end position="85"/>
    </location>
</feature>
<feature type="transmembrane region" description="Helical" evidence="2">
    <location>
        <begin position="222"/>
        <end position="242"/>
    </location>
</feature>
<feature type="domain" description="FtsK" evidence="3">
    <location>
        <begin position="456"/>
        <end position="665"/>
    </location>
</feature>
<feature type="binding site" evidence="3">
    <location>
        <begin position="479"/>
        <end position="486"/>
    </location>
    <ligand>
        <name>ATP</name>
        <dbReference type="ChEBI" id="CHEBI:30616"/>
    </ligand>
</feature>
<protein>
    <recommendedName>
        <fullName evidence="1">ESX-1 secretion system protein EccCa1</fullName>
    </recommendedName>
    <alternativeName>
        <fullName evidence="1">ESX conserved component Ca1</fullName>
    </alternativeName>
    <alternativeName>
        <fullName evidence="1">Type VII secretion system protein EccCa1</fullName>
        <shortName evidence="1">T7SS protein EccCa1</shortName>
    </alternativeName>
</protein>
<sequence length="747" mass="80913">MTTKKFTPTITRGPRLTPGEISLTPPDDLGIDIPPSGVQKILPYVMGGAMLGMIAIMVAGGTRQLSPYMLMMPLMMIVMMVGGLAGSTGGGGKKVPEINADRKEYLRYLAGLRTRVTSSATSQVAFFSYHAPHPEDLLSIVGTQRQWSRPANADFYAATRIGIGDQPAVDRLLKPAVGGELAAASAAPQPFLEPVSHMWVVKFLRTHGLIHDCPKLLQLRTFPTIAIGGDLAGAAGLMTAMICHLAVFHPPDLLQIRVLTEEPDDPDWSWLKWLPHVQHQTETDAAGSTRLIFTRQEGLSDLAARGPHAPDSLPGGPYVVVVDLTGGKAGFPPDGRAGVTVITLGNHRGSAYRIRVHEDGTADDRLPNQSFRQVTSVTDRMSPQQASRIARKLAGWSITGTILDKTSRVQKKVATDWHQLVGAQSVEEITPSRWRMYTDTDRDRLKIPFGHELKTGNVMYLDIKEGAEFGAGPHGMLIGTTGSGKSEFLRTLILSLVAMTHPDQVNLLLTDFKGGSTFLGMEKLPHTAAVVTNMAEEAELVSRMGEVLTGELDRRQSILRQAGMKVGAAGALSGVAEYEKYRERGADLPPLPTLFVVVDEFAELLQSHPDFIGLFDRICRVGRSLRVHLLLATQSLQTGGVRIDKLEPNLTYRIALRTTSSHESKAVIGTPEAQYITNKESGVGFLRVGMEDPVKFSTFYISGPYMPPAAGVETNGEAGGPGQQTTRQAARIHRFTAAPVLEEAPTP</sequence>
<proteinExistence type="inferred from homology"/>
<accession>P9WNB2</accession>
<accession>L0TE12</accession>
<accession>O69735</accession>
<accession>Q7D4P6</accession>
<name>ECC1A_MYCTO</name>
<keyword id="KW-0067">ATP-binding</keyword>
<keyword id="KW-0997">Cell inner membrane</keyword>
<keyword id="KW-1003">Cell membrane</keyword>
<keyword id="KW-0472">Membrane</keyword>
<keyword id="KW-0547">Nucleotide-binding</keyword>
<keyword id="KW-1185">Reference proteome</keyword>
<keyword id="KW-0812">Transmembrane</keyword>
<keyword id="KW-1133">Transmembrane helix</keyword>
<keyword id="KW-0813">Transport</keyword>
<evidence type="ECO:0000250" key="1">
    <source>
        <dbReference type="UniProtKB" id="P9WNB3"/>
    </source>
</evidence>
<evidence type="ECO:0000255" key="2"/>
<evidence type="ECO:0000255" key="3">
    <source>
        <dbReference type="PROSITE-ProRule" id="PRU00289"/>
    </source>
</evidence>
<evidence type="ECO:0000305" key="4"/>
<gene>
    <name evidence="1" type="primary">eccCa1</name>
    <name type="synonym">snm1</name>
    <name type="ordered locus">MT3983</name>
</gene>